<dbReference type="EMBL" id="AP008957">
    <property type="protein sequence ID" value="BAH34619.1"/>
    <property type="molecule type" value="Genomic_DNA"/>
</dbReference>
<dbReference type="RefSeq" id="WP_019749174.1">
    <property type="nucleotide sequence ID" value="NC_012490.1"/>
</dbReference>
<dbReference type="SMR" id="C1A1Y4"/>
<dbReference type="GeneID" id="57486178"/>
<dbReference type="KEGG" id="rer:RER_39110"/>
<dbReference type="eggNOG" id="COG0356">
    <property type="taxonomic scope" value="Bacteria"/>
</dbReference>
<dbReference type="HOGENOM" id="CLU_041018_0_1_11"/>
<dbReference type="Proteomes" id="UP000002204">
    <property type="component" value="Chromosome"/>
</dbReference>
<dbReference type="GO" id="GO:0005886">
    <property type="term" value="C:plasma membrane"/>
    <property type="evidence" value="ECO:0007669"/>
    <property type="project" value="UniProtKB-SubCell"/>
</dbReference>
<dbReference type="GO" id="GO:0045259">
    <property type="term" value="C:proton-transporting ATP synthase complex"/>
    <property type="evidence" value="ECO:0007669"/>
    <property type="project" value="UniProtKB-KW"/>
</dbReference>
<dbReference type="GO" id="GO:0046933">
    <property type="term" value="F:proton-transporting ATP synthase activity, rotational mechanism"/>
    <property type="evidence" value="ECO:0007669"/>
    <property type="project" value="UniProtKB-UniRule"/>
</dbReference>
<dbReference type="CDD" id="cd00310">
    <property type="entry name" value="ATP-synt_Fo_a_6"/>
    <property type="match status" value="1"/>
</dbReference>
<dbReference type="Gene3D" id="1.20.120.220">
    <property type="entry name" value="ATP synthase, F0 complex, subunit A"/>
    <property type="match status" value="1"/>
</dbReference>
<dbReference type="HAMAP" id="MF_01393">
    <property type="entry name" value="ATP_synth_a_bact"/>
    <property type="match status" value="1"/>
</dbReference>
<dbReference type="InterPro" id="IPR000568">
    <property type="entry name" value="ATP_synth_F0_asu"/>
</dbReference>
<dbReference type="InterPro" id="IPR045083">
    <property type="entry name" value="ATP_synth_F0_asu_bact/mt"/>
</dbReference>
<dbReference type="InterPro" id="IPR035908">
    <property type="entry name" value="F0_ATP_A_sf"/>
</dbReference>
<dbReference type="NCBIfam" id="TIGR01131">
    <property type="entry name" value="ATP_synt_6_or_A"/>
    <property type="match status" value="1"/>
</dbReference>
<dbReference type="PANTHER" id="PTHR11410">
    <property type="entry name" value="ATP SYNTHASE SUBUNIT A"/>
    <property type="match status" value="1"/>
</dbReference>
<dbReference type="PANTHER" id="PTHR11410:SF0">
    <property type="entry name" value="ATP SYNTHASE SUBUNIT A"/>
    <property type="match status" value="1"/>
</dbReference>
<dbReference type="Pfam" id="PF00119">
    <property type="entry name" value="ATP-synt_A"/>
    <property type="match status" value="1"/>
</dbReference>
<dbReference type="PRINTS" id="PR00123">
    <property type="entry name" value="ATPASEA"/>
</dbReference>
<dbReference type="SUPFAM" id="SSF81336">
    <property type="entry name" value="F1F0 ATP synthase subunit A"/>
    <property type="match status" value="1"/>
</dbReference>
<proteinExistence type="inferred from homology"/>
<accession>C1A1Y4</accession>
<evidence type="ECO:0000255" key="1">
    <source>
        <dbReference type="HAMAP-Rule" id="MF_01393"/>
    </source>
</evidence>
<reference key="1">
    <citation type="submission" date="2005-03" db="EMBL/GenBank/DDBJ databases">
        <title>Comparison of the complete genome sequences of Rhodococcus erythropolis PR4 and Rhodococcus opacus B4.</title>
        <authorList>
            <person name="Takarada H."/>
            <person name="Sekine M."/>
            <person name="Hosoyama A."/>
            <person name="Yamada R."/>
            <person name="Fujisawa T."/>
            <person name="Omata S."/>
            <person name="Shimizu A."/>
            <person name="Tsukatani N."/>
            <person name="Tanikawa S."/>
            <person name="Fujita N."/>
            <person name="Harayama S."/>
        </authorList>
    </citation>
    <scope>NUCLEOTIDE SEQUENCE [LARGE SCALE GENOMIC DNA]</scope>
    <source>
        <strain>PR4 / NBRC 100887</strain>
    </source>
</reference>
<protein>
    <recommendedName>
        <fullName evidence="1">ATP synthase subunit a</fullName>
    </recommendedName>
    <alternativeName>
        <fullName evidence="1">ATP synthase F0 sector subunit a</fullName>
    </alternativeName>
    <alternativeName>
        <fullName evidence="1">F-ATPase subunit 6</fullName>
    </alternativeName>
</protein>
<feature type="chain" id="PRO_1000215151" description="ATP synthase subunit a">
    <location>
        <begin position="1"/>
        <end position="275"/>
    </location>
</feature>
<feature type="transmembrane region" description="Helical" evidence="1">
    <location>
        <begin position="46"/>
        <end position="66"/>
    </location>
</feature>
<feature type="transmembrane region" description="Helical" evidence="1">
    <location>
        <begin position="104"/>
        <end position="124"/>
    </location>
</feature>
<feature type="transmembrane region" description="Helical" evidence="1">
    <location>
        <begin position="135"/>
        <end position="155"/>
    </location>
</feature>
<feature type="transmembrane region" description="Helical" evidence="1">
    <location>
        <begin position="166"/>
        <end position="186"/>
    </location>
</feature>
<feature type="transmembrane region" description="Helical" evidence="1">
    <location>
        <begin position="204"/>
        <end position="224"/>
    </location>
</feature>
<feature type="transmembrane region" description="Helical" evidence="1">
    <location>
        <begin position="231"/>
        <end position="251"/>
    </location>
</feature>
<feature type="transmembrane region" description="Helical" evidence="1">
    <location>
        <begin position="252"/>
        <end position="272"/>
    </location>
</feature>
<organism>
    <name type="scientific">Rhodococcus erythropolis (strain PR4 / NBRC 100887)</name>
    <dbReference type="NCBI Taxonomy" id="234621"/>
    <lineage>
        <taxon>Bacteria</taxon>
        <taxon>Bacillati</taxon>
        <taxon>Actinomycetota</taxon>
        <taxon>Actinomycetes</taxon>
        <taxon>Mycobacteriales</taxon>
        <taxon>Nocardiaceae</taxon>
        <taxon>Rhodococcus</taxon>
        <taxon>Rhodococcus erythropolis group</taxon>
    </lineage>
</organism>
<comment type="function">
    <text evidence="1">Key component of the proton channel; it plays a direct role in the translocation of protons across the membrane.</text>
</comment>
<comment type="subunit">
    <text evidence="1">F-type ATPases have 2 components, CF(1) - the catalytic core - and CF(0) - the membrane proton channel. CF(1) has five subunits: alpha(3), beta(3), gamma(1), delta(1), epsilon(1). CF(0) has three main subunits: a(1), b(2) and c(9-12). The alpha and beta chains form an alternating ring which encloses part of the gamma chain. CF(1) is attached to CF(0) by a central stalk formed by the gamma and epsilon chains, while a peripheral stalk is formed by the delta and b chains.</text>
</comment>
<comment type="subcellular location">
    <subcellularLocation>
        <location evidence="1">Cell membrane</location>
        <topology evidence="1">Multi-pass membrane protein</topology>
    </subcellularLocation>
</comment>
<comment type="similarity">
    <text evidence="1">Belongs to the ATPase A chain family.</text>
</comment>
<name>ATP6_RHOE4</name>
<keyword id="KW-0066">ATP synthesis</keyword>
<keyword id="KW-1003">Cell membrane</keyword>
<keyword id="KW-0138">CF(0)</keyword>
<keyword id="KW-0375">Hydrogen ion transport</keyword>
<keyword id="KW-0406">Ion transport</keyword>
<keyword id="KW-0472">Membrane</keyword>
<keyword id="KW-0812">Transmembrane</keyword>
<keyword id="KW-1133">Transmembrane helix</keyword>
<keyword id="KW-0813">Transport</keyword>
<gene>
    <name evidence="1" type="primary">atpB</name>
    <name type="ordered locus">RER_39110</name>
</gene>
<sequence length="275" mass="30671">MMAADRLRERTLSVTTLAADEFHAPSLDDFFPPSVLIHAGPFELDRLMLIRLLMSVLVAAFFVIAMRSPRLVPRGMQNAAELALDFVRINIAEEILGKEQGKRFLPVITTIFFIVVASNMASIIPFLNISPNARIGMPLVLAALAYIVFNYVGIKKYGFFKYVKSSIVVPGVPLPLHFLLVPIEFISTFILRPFTLMVRLMANMLAGHILLVLFFSATNYFFFVSGGFQAIFGVPSIIAGIAFTFFELLVIFLQAYVFALLTAVYIELALHADEH</sequence>